<name>NCAP_TOSV</name>
<accession>P21701</accession>
<gene>
    <name type="primary">N</name>
</gene>
<proteinExistence type="evidence at protein level"/>
<protein>
    <recommendedName>
        <fullName>Nucleoprotein</fullName>
    </recommendedName>
    <alternativeName>
        <fullName>Nucleocapsid protein</fullName>
        <shortName>Protein N</shortName>
    </alternativeName>
</protein>
<comment type="function">
    <text evidence="1 3 4 5 6">Encapsidates the genomic RNA, protecting it from nucleases (PubMed:24688060, PubMed:28777080). Displays high affinity for single-stranded nucleic acid (PubMed:23129612). The encapsidated genomic RNA is termed the nucleocapsid (NC) or ribonucleoprotein (PubMed:24688060, PubMed:28777080). The ribonucleoprotein has a non-helical structure (By similarity). Serves as template for viral transcription and replication. After replication, the nucleocapsid is recruited to the host Golgi apparatus by glycoprotein Gn for packaging into virus particles (By similarity).</text>
</comment>
<comment type="subunit">
    <text evidence="1 3 4 5 6">Homodimer (By similarity). Homohexamer; ring-shaped, necessary to form the nucleocapsid (PubMed:23129612, PubMed:24688060, PubMed:28777080). Homopentamers; opened pentamers in solution (PubMed:28777080). Binds to viral genomic RNA (PubMed:23129612, PubMed:24688060). Interacts with glycoprotein Gn; this interaction allows packaging of nucleocapsids into virions (By similarity).</text>
</comment>
<comment type="subcellular location">
    <subcellularLocation>
        <location evidence="1">Virion</location>
    </subcellularLocation>
    <subcellularLocation>
        <location evidence="1">Host cytoplasm</location>
    </subcellularLocation>
    <subcellularLocation>
        <location evidence="1">Host nucleus</location>
    </subcellularLocation>
    <subcellularLocation>
        <location evidence="2">Host endoplasmic reticulum-Golgi intermediate compartment</location>
    </subcellularLocation>
    <subcellularLocation>
        <location evidence="2">Host Golgi apparatus</location>
    </subcellularLocation>
</comment>
<comment type="domain">
    <text evidence="5 7">The N-terminus is involved in homooligomerization.</text>
</comment>
<comment type="similarity">
    <text evidence="8">Belongs to the phlebovirus nucleocapsid protein family.</text>
</comment>
<feature type="chain" id="PRO_0000221997" description="Nucleoprotein">
    <location>
        <begin position="1"/>
        <end position="253"/>
    </location>
</feature>
<feature type="binding site" evidence="5">
    <location>
        <position position="32"/>
    </location>
    <ligand>
        <name>RNA</name>
        <dbReference type="ChEBI" id="CHEBI:33697"/>
    </ligand>
</feature>
<feature type="binding site" evidence="5">
    <location>
        <position position="35"/>
    </location>
    <ligand>
        <name>RNA</name>
        <dbReference type="ChEBI" id="CHEBI:33697"/>
    </ligand>
</feature>
<feature type="binding site" evidence="5">
    <location>
        <position position="68"/>
    </location>
    <ligand>
        <name>RNA</name>
        <dbReference type="ChEBI" id="CHEBI:33697"/>
    </ligand>
</feature>
<feature type="binding site" evidence="5">
    <location>
        <position position="72"/>
    </location>
    <ligand>
        <name>RNA</name>
        <dbReference type="ChEBI" id="CHEBI:33697"/>
    </ligand>
</feature>
<feature type="binding site" evidence="5">
    <location>
        <position position="110"/>
    </location>
    <ligand>
        <name>RNA</name>
        <dbReference type="ChEBI" id="CHEBI:33697"/>
    </ligand>
</feature>
<feature type="binding site" evidence="5">
    <location>
        <position position="111"/>
    </location>
    <ligand>
        <name>RNA</name>
        <dbReference type="ChEBI" id="CHEBI:33697"/>
    </ligand>
</feature>
<feature type="binding site" evidence="5">
    <location>
        <position position="191"/>
    </location>
    <ligand>
        <name>RNA</name>
        <dbReference type="ChEBI" id="CHEBI:33697"/>
    </ligand>
</feature>
<feature type="binding site" evidence="5">
    <location>
        <position position="201"/>
    </location>
    <ligand>
        <name>RNA</name>
        <dbReference type="ChEBI" id="CHEBI:33697"/>
    </ligand>
</feature>
<feature type="binding site" evidence="5">
    <location>
        <position position="204"/>
    </location>
    <ligand>
        <name>RNA</name>
        <dbReference type="ChEBI" id="CHEBI:33697"/>
    </ligand>
</feature>
<feature type="binding site" evidence="5">
    <location>
        <position position="211"/>
    </location>
    <ligand>
        <name>RNA</name>
        <dbReference type="ChEBI" id="CHEBI:33697"/>
    </ligand>
</feature>
<feature type="mutagenesis site" description="Reduced RNA-binding affinity." evidence="5">
    <original>Y</original>
    <variation>A</variation>
    <location>
        <position position="32"/>
    </location>
</feature>
<feature type="mutagenesis site" description="No effect on RNA-binding affinity." evidence="5">
    <original>K</original>
    <variation>A</variation>
    <location>
        <position position="79"/>
    </location>
</feature>
<feature type="mutagenesis site" description="No effect on RNA-binding affinity." evidence="5">
    <original>K</original>
    <variation>A</variation>
    <location>
        <position position="204"/>
    </location>
</feature>
<feature type="helix" evidence="14">
    <location>
        <begin position="6"/>
        <end position="11"/>
    </location>
</feature>
<feature type="helix" evidence="14">
    <location>
        <begin position="12"/>
        <end position="15"/>
    </location>
</feature>
<feature type="helix" evidence="14">
    <location>
        <begin position="20"/>
        <end position="30"/>
    </location>
</feature>
<feature type="helix" evidence="14">
    <location>
        <begin position="37"/>
        <end position="50"/>
    </location>
</feature>
<feature type="helix" evidence="14">
    <location>
        <begin position="55"/>
        <end position="69"/>
    </location>
</feature>
<feature type="helix" evidence="14">
    <location>
        <begin position="73"/>
        <end position="76"/>
    </location>
</feature>
<feature type="helix" evidence="14">
    <location>
        <begin position="77"/>
        <end position="79"/>
    </location>
</feature>
<feature type="helix" evidence="14">
    <location>
        <begin position="82"/>
        <end position="95"/>
    </location>
</feature>
<feature type="strand" evidence="16">
    <location>
        <begin position="99"/>
        <end position="101"/>
    </location>
</feature>
<feature type="strand" evidence="15">
    <location>
        <begin position="104"/>
        <end position="106"/>
    </location>
</feature>
<feature type="helix" evidence="14">
    <location>
        <begin position="109"/>
        <end position="115"/>
    </location>
</feature>
<feature type="helix" evidence="14">
    <location>
        <begin position="117"/>
        <end position="127"/>
    </location>
</feature>
<feature type="helix" evidence="14">
    <location>
        <begin position="128"/>
        <end position="130"/>
    </location>
</feature>
<feature type="strand" evidence="14">
    <location>
        <begin position="131"/>
        <end position="133"/>
    </location>
</feature>
<feature type="helix" evidence="14">
    <location>
        <begin position="135"/>
        <end position="141"/>
    </location>
</feature>
<feature type="strand" evidence="14">
    <location>
        <begin position="142"/>
        <end position="144"/>
    </location>
</feature>
<feature type="helix" evidence="14">
    <location>
        <begin position="148"/>
        <end position="150"/>
    </location>
</feature>
<feature type="helix" evidence="14">
    <location>
        <begin position="153"/>
        <end position="158"/>
    </location>
</feature>
<feature type="helix" evidence="14">
    <location>
        <begin position="164"/>
        <end position="166"/>
    </location>
</feature>
<feature type="helix" evidence="14">
    <location>
        <begin position="167"/>
        <end position="186"/>
    </location>
</feature>
<feature type="helix" evidence="14">
    <location>
        <begin position="188"/>
        <end position="192"/>
    </location>
</feature>
<feature type="helix" evidence="14">
    <location>
        <begin position="195"/>
        <end position="210"/>
    </location>
</feature>
<feature type="strand" evidence="16">
    <location>
        <begin position="213"/>
        <end position="215"/>
    </location>
</feature>
<feature type="helix" evidence="14">
    <location>
        <begin position="217"/>
        <end position="226"/>
    </location>
</feature>
<feature type="helix" evidence="14">
    <location>
        <begin position="238"/>
        <end position="251"/>
    </location>
</feature>
<organism>
    <name type="scientific">Toscana virus</name>
    <name type="common">Tos</name>
    <dbReference type="NCBI Taxonomy" id="11590"/>
    <lineage>
        <taxon>Viruses</taxon>
        <taxon>Riboviria</taxon>
        <taxon>Orthornavirae</taxon>
        <taxon>Negarnaviricota</taxon>
        <taxon>Polyploviricotina</taxon>
        <taxon>Ellioviricetes</taxon>
        <taxon>Bunyavirales</taxon>
        <taxon>Phenuiviridae</taxon>
        <taxon>Phlebovirus</taxon>
        <taxon>Phlebovirus toscanaense</taxon>
    </lineage>
</organism>
<reference key="1">
    <citation type="journal article" date="1991" name="Virology">
        <title>Sequences and coding strategies of the S RNAs of Toscana and Rift Valley fever viruses compared to those of Punta Toro, Sicilian Sandfly fever, and Uukuniemi viruses.</title>
        <authorList>
            <person name="Giorgi C."/>
            <person name="Accardi L."/>
            <person name="Nicoletti L."/>
            <person name="Gro M.C."/>
            <person name="Takehara K."/>
            <person name="Hilditch C."/>
            <person name="Morikawa S."/>
            <person name="Bishop D.H.L."/>
        </authorList>
    </citation>
    <scope>NUCLEOTIDE SEQUENCE [GENOMIC RNA]</scope>
</reference>
<reference evidence="11" key="2">
    <citation type="journal article" date="2012" name="Proc. Natl. Acad. Sci. U.S.A.">
        <title>Phleboviruses encapsidate their genomes by sequestering RNA bases.</title>
        <authorList>
            <person name="Raymond D.D."/>
            <person name="Piper M.E."/>
            <person name="Gerrard S.R."/>
            <person name="Skiniotis G."/>
            <person name="Smith J.L."/>
        </authorList>
    </citation>
    <scope>X-RAY CRYSTALLOGRAPHY (2.75 ANGSTROMS)</scope>
    <scope>RNA-BINDING</scope>
    <scope>FUNCTION</scope>
    <scope>SUBUNIT</scope>
</reference>
<reference evidence="9 10" key="3">
    <citation type="journal article" date="2014" name="Nucleic Acids Res.">
        <title>Structural insights into RNA encapsidation and helical assembly of the Toscana virus nucleoprotein.</title>
        <authorList>
            <person name="Olal D."/>
            <person name="Dick A."/>
            <person name="Woods V.L. Jr."/>
            <person name="Liu T."/>
            <person name="Li S."/>
            <person name="Devignot S."/>
            <person name="Weber F."/>
            <person name="Saphire E.O."/>
            <person name="Daumke O."/>
        </authorList>
    </citation>
    <scope>X-RAY CRYSTALLOGRAPHY (2.60 ANGSTROMS) IN COMPLEX WITH SINGLE-STRANDED RNA</scope>
    <scope>FUNCTION</scope>
    <scope>SUBUNIT</scope>
    <scope>MUTAGENESIS OF TYR-32; LYS-79 AND LYS-204</scope>
    <scope>DOMAIN</scope>
</reference>
<reference evidence="12" key="4">
    <citation type="journal article" date="2017" name="Acta Crystallogr. D">
        <title>Toscana virus nucleoprotein oligomer organization observed in solution.</title>
        <authorList>
            <person name="Baklouti A."/>
            <person name="Goulet A."/>
            <person name="Lichiere J."/>
            <person name="Canard B."/>
            <person name="Charrel R.N."/>
            <person name="Ferron F."/>
            <person name="Coutard B."/>
            <person name="Papageorgiou N."/>
        </authorList>
    </citation>
    <scope>X-RAY CRYSTALLOGRAPHY (3.70 ANGSTROMS) OF 2-253</scope>
    <scope>FUNCTION</scope>
    <scope>SUBUNIT</scope>
</reference>
<reference evidence="13" key="5">
    <citation type="journal article" date="2024" name="Acta Crystallogr. D Struct. Biol.">
        <title>Structural flexibility of Toscana virus nucleoprotein in the presence of a single-chain camelid antibody.</title>
        <authorList>
            <person name="Papageorgiou N."/>
            <person name="Baklouti A."/>
            <person name="Lichiere J."/>
            <person name="Desmyter A."/>
            <person name="Canard B."/>
            <person name="Coutard B."/>
            <person name="Ferron F."/>
        </authorList>
    </citation>
    <scope>X-RAY CRYSTALLOGRAPHY (3.80 ANGSTROMS) OF 2-253 IN COMPLEX WITH A NANOBODY</scope>
    <scope>DOMAIN</scope>
</reference>
<organismHost>
    <name type="scientific">Homo sapiens</name>
    <name type="common">Human</name>
    <dbReference type="NCBI Taxonomy" id="9606"/>
</organismHost>
<organismHost>
    <name type="scientific">Phlebotomus perniciosus</name>
    <name type="common">Phlebotomine sand fly</name>
    <dbReference type="NCBI Taxonomy" id="13204"/>
</organismHost>
<dbReference type="EMBL" id="X53794">
    <property type="protein sequence ID" value="CAA37803.1"/>
    <property type="molecule type" value="Genomic_RNA"/>
</dbReference>
<dbReference type="PIR" id="B38552">
    <property type="entry name" value="VHVUTV"/>
</dbReference>
<dbReference type="PDB" id="4CSF">
    <property type="method" value="X-ray"/>
    <property type="resolution" value="2.60 A"/>
    <property type="chains" value="A/B/C/D/E/F/G/H/I/J/K/L/M/N/O/P/Q/R/S/T/U/V/W/X=1-253"/>
</dbReference>
<dbReference type="PDB" id="4CSG">
    <property type="method" value="X-ray"/>
    <property type="resolution" value="3.32 A"/>
    <property type="chains" value="A/B/C/D/E/F/G/H/I/J/K/L=1-253"/>
</dbReference>
<dbReference type="PDB" id="4H5L">
    <property type="method" value="X-ray"/>
    <property type="resolution" value="2.75 A"/>
    <property type="chains" value="A/B/C/D/E/F=1-253"/>
</dbReference>
<dbReference type="PDB" id="5FVA">
    <property type="method" value="X-ray"/>
    <property type="resolution" value="3.70 A"/>
    <property type="chains" value="A/B/C/D/E/F=2-253"/>
</dbReference>
<dbReference type="PDB" id="8RCQ">
    <property type="method" value="X-ray"/>
    <property type="resolution" value="3.80 A"/>
    <property type="chains" value="A=2-253"/>
</dbReference>
<dbReference type="PDBsum" id="4CSF"/>
<dbReference type="PDBsum" id="4CSG"/>
<dbReference type="PDBsum" id="4H5L"/>
<dbReference type="PDBsum" id="5FVA"/>
<dbReference type="PDBsum" id="8RCQ"/>
<dbReference type="SMR" id="P21701"/>
<dbReference type="DIP" id="DIP-60331N"/>
<dbReference type="KEGG" id="vg:3077270"/>
<dbReference type="EvolutionaryTrace" id="P21701"/>
<dbReference type="Proteomes" id="UP000204292">
    <property type="component" value="Genome"/>
</dbReference>
<dbReference type="GO" id="GO:0019029">
    <property type="term" value="C:helical viral capsid"/>
    <property type="evidence" value="ECO:0007669"/>
    <property type="project" value="UniProtKB-KW"/>
</dbReference>
<dbReference type="GO" id="GO:0044172">
    <property type="term" value="C:host cell endoplasmic reticulum-Golgi intermediate compartment"/>
    <property type="evidence" value="ECO:0007669"/>
    <property type="project" value="UniProtKB-SubCell"/>
</dbReference>
<dbReference type="GO" id="GO:0044177">
    <property type="term" value="C:host cell Golgi apparatus"/>
    <property type="evidence" value="ECO:0007669"/>
    <property type="project" value="UniProtKB-SubCell"/>
</dbReference>
<dbReference type="GO" id="GO:0042025">
    <property type="term" value="C:host cell nucleus"/>
    <property type="evidence" value="ECO:0007669"/>
    <property type="project" value="UniProtKB-SubCell"/>
</dbReference>
<dbReference type="GO" id="GO:1990904">
    <property type="term" value="C:ribonucleoprotein complex"/>
    <property type="evidence" value="ECO:0007669"/>
    <property type="project" value="UniProtKB-KW"/>
</dbReference>
<dbReference type="GO" id="GO:0019013">
    <property type="term" value="C:viral nucleocapsid"/>
    <property type="evidence" value="ECO:0007669"/>
    <property type="project" value="UniProtKB-KW"/>
</dbReference>
<dbReference type="GO" id="GO:0003723">
    <property type="term" value="F:RNA binding"/>
    <property type="evidence" value="ECO:0007669"/>
    <property type="project" value="UniProtKB-KW"/>
</dbReference>
<dbReference type="InterPro" id="IPR009522">
    <property type="entry name" value="Capsid_Phlebovir/Tenuivir"/>
</dbReference>
<dbReference type="InterPro" id="IPR015971">
    <property type="entry name" value="Nucleocapsid_Phlebovirus"/>
</dbReference>
<dbReference type="Pfam" id="PF05733">
    <property type="entry name" value="Tenui_N"/>
    <property type="match status" value="1"/>
</dbReference>
<dbReference type="PIRSF" id="PIRSF003953">
    <property type="entry name" value="N_PhelboV"/>
    <property type="match status" value="1"/>
</dbReference>
<sequence>MSDENYRDIALAFLDESADSGTINAWVNEFAYQGFDPKRIVQLVKERGTAKGRDWKKDVKMMIVLNLVRGNKPEAMMKKMSEKGASIVANLISVYQLKEGNPGRDTITLSRVSAAFVPWTVQALRVLSESLPVSGTTMDAIAGVTYPRAMMHPSFAGIIDLDLPNGAGATIADAHGLFMIEFSKTINPSLRTKQANEVAATFEKPNMAAMSGRFFTREDKKKLLIAVGIIDEDLVLASAVVRSAEKYRAKVGK</sequence>
<keyword id="KW-0002">3D-structure</keyword>
<keyword id="KW-0167">Capsid protein</keyword>
<keyword id="KW-1139">Helical capsid protein</keyword>
<keyword id="KW-1035">Host cytoplasm</keyword>
<keyword id="KW-1040">Host Golgi apparatus</keyword>
<keyword id="KW-1048">Host nucleus</keyword>
<keyword id="KW-1185">Reference proteome</keyword>
<keyword id="KW-0687">Ribonucleoprotein</keyword>
<keyword id="KW-0694">RNA-binding</keyword>
<keyword id="KW-0543">Viral nucleoprotein</keyword>
<keyword id="KW-0946">Virion</keyword>
<evidence type="ECO:0000250" key="1">
    <source>
        <dbReference type="UniProtKB" id="D3K5I7"/>
    </source>
</evidence>
<evidence type="ECO:0000250" key="2">
    <source>
        <dbReference type="UniProtKB" id="I6WJ72"/>
    </source>
</evidence>
<evidence type="ECO:0000250" key="3">
    <source>
        <dbReference type="UniProtKB" id="P21700"/>
    </source>
</evidence>
<evidence type="ECO:0000269" key="4">
    <source>
    </source>
</evidence>
<evidence type="ECO:0000269" key="5">
    <source>
    </source>
</evidence>
<evidence type="ECO:0000269" key="6">
    <source>
    </source>
</evidence>
<evidence type="ECO:0000269" key="7">
    <source>
    </source>
</evidence>
<evidence type="ECO:0000305" key="8"/>
<evidence type="ECO:0007744" key="9">
    <source>
        <dbReference type="PDB" id="4CSF"/>
    </source>
</evidence>
<evidence type="ECO:0007744" key="10">
    <source>
        <dbReference type="PDB" id="4CSG"/>
    </source>
</evidence>
<evidence type="ECO:0007744" key="11">
    <source>
        <dbReference type="PDB" id="4H5L"/>
    </source>
</evidence>
<evidence type="ECO:0007744" key="12">
    <source>
        <dbReference type="PDB" id="5FVA"/>
    </source>
</evidence>
<evidence type="ECO:0007744" key="13">
    <source>
        <dbReference type="PDB" id="8RCQ"/>
    </source>
</evidence>
<evidence type="ECO:0007829" key="14">
    <source>
        <dbReference type="PDB" id="4CSF"/>
    </source>
</evidence>
<evidence type="ECO:0007829" key="15">
    <source>
        <dbReference type="PDB" id="4CSG"/>
    </source>
</evidence>
<evidence type="ECO:0007829" key="16">
    <source>
        <dbReference type="PDB" id="4H5L"/>
    </source>
</evidence>